<evidence type="ECO:0000255" key="1"/>
<evidence type="ECO:0000255" key="2">
    <source>
        <dbReference type="PROSITE-ProRule" id="PRU01210"/>
    </source>
</evidence>
<evidence type="ECO:0000305" key="3"/>
<evidence type="ECO:0000305" key="4">
    <source>
    </source>
</evidence>
<evidence type="ECO:0000312" key="5">
    <source>
        <dbReference type="EMBL" id="GT029211"/>
    </source>
</evidence>
<protein>
    <recommendedName>
        <fullName evidence="5">Neurotoxin 213</fullName>
    </recommendedName>
</protein>
<dbReference type="EMBL" id="GT029211">
    <property type="status" value="NOT_ANNOTATED_CDS"/>
    <property type="molecule type" value="mRNA"/>
</dbReference>
<dbReference type="SMR" id="P0CI98"/>
<dbReference type="GO" id="GO:0005576">
    <property type="term" value="C:extracellular region"/>
    <property type="evidence" value="ECO:0007669"/>
    <property type="project" value="UniProtKB-SubCell"/>
</dbReference>
<dbReference type="GO" id="GO:0019871">
    <property type="term" value="F:sodium channel inhibitor activity"/>
    <property type="evidence" value="ECO:0007669"/>
    <property type="project" value="InterPro"/>
</dbReference>
<dbReference type="GO" id="GO:0090729">
    <property type="term" value="F:toxin activity"/>
    <property type="evidence" value="ECO:0007669"/>
    <property type="project" value="UniProtKB-KW"/>
</dbReference>
<dbReference type="CDD" id="cd23106">
    <property type="entry name" value="neurotoxins_LC_scorpion"/>
    <property type="match status" value="1"/>
</dbReference>
<dbReference type="Gene3D" id="3.30.30.10">
    <property type="entry name" value="Knottin, scorpion toxin-like"/>
    <property type="match status" value="1"/>
</dbReference>
<dbReference type="InterPro" id="IPR044062">
    <property type="entry name" value="LCN-type_CS_alpha_beta_dom"/>
</dbReference>
<dbReference type="InterPro" id="IPR036574">
    <property type="entry name" value="Scorpion_toxin-like_sf"/>
</dbReference>
<dbReference type="InterPro" id="IPR002061">
    <property type="entry name" value="Scorpion_toxinL/defensin"/>
</dbReference>
<dbReference type="Pfam" id="PF00537">
    <property type="entry name" value="Toxin_3"/>
    <property type="match status" value="1"/>
</dbReference>
<dbReference type="SUPFAM" id="SSF57095">
    <property type="entry name" value="Scorpion toxin-like"/>
    <property type="match status" value="1"/>
</dbReference>
<dbReference type="PROSITE" id="PS51863">
    <property type="entry name" value="LCN_CSAB"/>
    <property type="match status" value="1"/>
</dbReference>
<proteinExistence type="inferred from homology"/>
<name>STX13_LYCMC</name>
<reference key="1">
    <citation type="journal article" date="2010" name="BMC Genomics">
        <title>Comparative venom gland transcriptome analysis of the scorpion Lychas mucronatus reveals intraspecific toxic gene diversity and new venomous components.</title>
        <authorList>
            <person name="Zhao R."/>
            <person name="Ma Y."/>
            <person name="He Y."/>
            <person name="Di Z."/>
            <person name="Wu Y.-L."/>
            <person name="Cao Z.-J."/>
            <person name="Li W.-X."/>
        </authorList>
    </citation>
    <scope>NUCLEOTIDE SEQUENCE [MRNA]</scope>
    <source>
        <strain>Yunnan</strain>
        <tissue>Venom gland</tissue>
    </source>
</reference>
<sequence>MLKFILTCTSVILFTAVEDSSCGKGGNYPISVYESYYGCKLKLDDGYCKNICGLHGVSYGYCYASYCWCEKLSDRNVRYWDYHRNNCKNDLLYP</sequence>
<feature type="signal peptide" evidence="1">
    <location>
        <begin position="1"/>
        <end position="22"/>
    </location>
</feature>
<feature type="chain" id="PRO_0000403888" description="Neurotoxin 213">
    <location>
        <begin position="23"/>
        <end position="94"/>
    </location>
</feature>
<feature type="domain" description="LCN-type CS-alpha/beta" evidence="2">
    <location>
        <begin position="24"/>
        <end position="88"/>
    </location>
</feature>
<feature type="disulfide bond" evidence="2">
    <location>
        <begin position="39"/>
        <end position="62"/>
    </location>
</feature>
<feature type="disulfide bond" evidence="2">
    <location>
        <begin position="48"/>
        <end position="67"/>
    </location>
</feature>
<feature type="disulfide bond" evidence="2">
    <location>
        <begin position="52"/>
        <end position="69"/>
    </location>
</feature>
<comment type="subcellular location">
    <subcellularLocation>
        <location evidence="4">Secreted</location>
    </subcellularLocation>
</comment>
<comment type="tissue specificity">
    <text evidence="4">Expressed by the venom gland.</text>
</comment>
<comment type="domain">
    <text evidence="3">Has the structural arrangement of an alpha-helix connected to antiparallel beta-sheets by disulfide bonds (CS-alpha/beta).</text>
</comment>
<comment type="similarity">
    <text>Belongs to the long (3 C-C) scorpion toxin superfamily.</text>
</comment>
<accession>P0CI98</accession>
<organism>
    <name type="scientific">Lychas mucronatus</name>
    <name type="common">Chinese swimming scorpion</name>
    <dbReference type="NCBI Taxonomy" id="172552"/>
    <lineage>
        <taxon>Eukaryota</taxon>
        <taxon>Metazoa</taxon>
        <taxon>Ecdysozoa</taxon>
        <taxon>Arthropoda</taxon>
        <taxon>Chelicerata</taxon>
        <taxon>Arachnida</taxon>
        <taxon>Scorpiones</taxon>
        <taxon>Buthida</taxon>
        <taxon>Buthoidea</taxon>
        <taxon>Buthidae</taxon>
        <taxon>Lychas</taxon>
    </lineage>
</organism>
<keyword id="KW-1015">Disulfide bond</keyword>
<keyword id="KW-0528">Neurotoxin</keyword>
<keyword id="KW-0964">Secreted</keyword>
<keyword id="KW-0732">Signal</keyword>
<keyword id="KW-0800">Toxin</keyword>